<gene>
    <name type="primary">LOG2</name>
    <name type="ordered locus">At2g35990</name>
    <name type="ORF">F11F19.10</name>
</gene>
<dbReference type="EC" id="3.2.2.n1"/>
<dbReference type="EMBL" id="AC007017">
    <property type="protein sequence ID" value="AAD21458.1"/>
    <property type="status" value="ALT_SEQ"/>
    <property type="molecule type" value="Genomic_DNA"/>
</dbReference>
<dbReference type="EMBL" id="CP002685">
    <property type="protein sequence ID" value="AEC09186.1"/>
    <property type="molecule type" value="Genomic_DNA"/>
</dbReference>
<dbReference type="EMBL" id="AY924758">
    <property type="protein sequence ID" value="AAX23833.1"/>
    <property type="molecule type" value="mRNA"/>
</dbReference>
<dbReference type="EMBL" id="AY648327">
    <property type="protein sequence ID" value="AAT68738.1"/>
    <property type="molecule type" value="mRNA"/>
</dbReference>
<dbReference type="EMBL" id="AY648328">
    <property type="protein sequence ID" value="AAT68739.1"/>
    <property type="molecule type" value="mRNA"/>
</dbReference>
<dbReference type="PIR" id="E84775">
    <property type="entry name" value="E84775"/>
</dbReference>
<dbReference type="RefSeq" id="NP_181143.3">
    <molecule id="Q5BPS0-1"/>
    <property type="nucleotide sequence ID" value="NM_129158.4"/>
</dbReference>
<dbReference type="SMR" id="Q5BPS0"/>
<dbReference type="STRING" id="3702.Q5BPS0"/>
<dbReference type="PaxDb" id="3702-AT2G35990.1"/>
<dbReference type="EnsemblPlants" id="AT2G35990.1">
    <molecule id="Q5BPS0-1"/>
    <property type="protein sequence ID" value="AT2G35990.1"/>
    <property type="gene ID" value="AT2G35990"/>
</dbReference>
<dbReference type="GeneID" id="818172"/>
<dbReference type="Gramene" id="AT2G35990.1">
    <molecule id="Q5BPS0-1"/>
    <property type="protein sequence ID" value="AT2G35990.1"/>
    <property type="gene ID" value="AT2G35990"/>
</dbReference>
<dbReference type="KEGG" id="ath:AT2G35990"/>
<dbReference type="Araport" id="AT2G35990"/>
<dbReference type="TAIR" id="AT2G35990">
    <property type="gene designation" value="LOG2"/>
</dbReference>
<dbReference type="eggNOG" id="ENOG502QSR9">
    <property type="taxonomic scope" value="Eukaryota"/>
</dbReference>
<dbReference type="HOGENOM" id="CLU_058336_2_2_1"/>
<dbReference type="InParanoid" id="Q5BPS0"/>
<dbReference type="OMA" id="ISHAVHD"/>
<dbReference type="OrthoDB" id="414463at2759"/>
<dbReference type="PhylomeDB" id="Q5BPS0"/>
<dbReference type="PRO" id="PR:Q5BPS0"/>
<dbReference type="Proteomes" id="UP000006548">
    <property type="component" value="Chromosome 2"/>
</dbReference>
<dbReference type="ExpressionAtlas" id="Q5BPS0">
    <property type="expression patterns" value="baseline and differential"/>
</dbReference>
<dbReference type="GO" id="GO:0005829">
    <property type="term" value="C:cytosol"/>
    <property type="evidence" value="ECO:0000314"/>
    <property type="project" value="TAIR"/>
</dbReference>
<dbReference type="GO" id="GO:0005634">
    <property type="term" value="C:nucleus"/>
    <property type="evidence" value="ECO:0000314"/>
    <property type="project" value="TAIR"/>
</dbReference>
<dbReference type="GO" id="GO:0102682">
    <property type="term" value="F:cytokinin riboside 5'-monophosphate phosphoribohydrolase activity"/>
    <property type="evidence" value="ECO:0007669"/>
    <property type="project" value="RHEA"/>
</dbReference>
<dbReference type="GO" id="GO:0009691">
    <property type="term" value="P:cytokinin biosynthetic process"/>
    <property type="evidence" value="ECO:0007669"/>
    <property type="project" value="UniProtKB-KW"/>
</dbReference>
<dbReference type="FunFam" id="3.40.50.450:FF:000036">
    <property type="entry name" value="Cytokinin riboside 5'-monophosphate phosphoribohydrolase LOG2"/>
    <property type="match status" value="1"/>
</dbReference>
<dbReference type="Gene3D" id="3.40.50.450">
    <property type="match status" value="1"/>
</dbReference>
<dbReference type="InterPro" id="IPR005269">
    <property type="entry name" value="LOG"/>
</dbReference>
<dbReference type="InterPro" id="IPR031100">
    <property type="entry name" value="LOG_fam"/>
</dbReference>
<dbReference type="NCBIfam" id="TIGR00730">
    <property type="entry name" value="Rossman fold protein, TIGR00730 family"/>
    <property type="match status" value="1"/>
</dbReference>
<dbReference type="PANTHER" id="PTHR31223:SF68">
    <property type="entry name" value="CYTOKININ RIBOSIDE 5'-MONOPHOSPHATE PHOSPHORIBOHYDROLASE LOG2"/>
    <property type="match status" value="1"/>
</dbReference>
<dbReference type="PANTHER" id="PTHR31223">
    <property type="entry name" value="LOG FAMILY PROTEIN YJL055W"/>
    <property type="match status" value="1"/>
</dbReference>
<dbReference type="Pfam" id="PF03641">
    <property type="entry name" value="Lysine_decarbox"/>
    <property type="match status" value="1"/>
</dbReference>
<dbReference type="SUPFAM" id="SSF102405">
    <property type="entry name" value="MCP/YpsA-like"/>
    <property type="match status" value="1"/>
</dbReference>
<keyword id="KW-0025">Alternative splicing</keyword>
<keyword id="KW-0203">Cytokinin biosynthesis</keyword>
<keyword id="KW-0963">Cytoplasm</keyword>
<keyword id="KW-0378">Hydrolase</keyword>
<keyword id="KW-0539">Nucleus</keyword>
<keyword id="KW-1185">Reference proteome</keyword>
<proteinExistence type="evidence at protein level"/>
<feature type="chain" id="PRO_0000395045" description="Cytokinin riboside 5'-monophosphate phosphoribohydrolase LOG2">
    <location>
        <begin position="1"/>
        <end position="213"/>
    </location>
</feature>
<feature type="binding site" evidence="1">
    <location>
        <position position="79"/>
    </location>
    <ligand>
        <name>substrate</name>
    </ligand>
</feature>
<feature type="binding site" evidence="1">
    <location>
        <begin position="97"/>
        <end position="98"/>
    </location>
    <ligand>
        <name>substrate</name>
    </ligand>
</feature>
<feature type="binding site" evidence="1">
    <location>
        <begin position="114"/>
        <end position="120"/>
    </location>
    <ligand>
        <name>substrate</name>
    </ligand>
</feature>
<feature type="binding site" evidence="1">
    <location>
        <position position="126"/>
    </location>
    <ligand>
        <name>substrate</name>
    </ligand>
</feature>
<feature type="splice variant" id="VSP_039355" description="In isoform 2." evidence="3">
    <location>
        <begin position="1"/>
        <end position="93"/>
    </location>
</feature>
<reference key="1">
    <citation type="journal article" date="1999" name="Nature">
        <title>Sequence and analysis of chromosome 2 of the plant Arabidopsis thaliana.</title>
        <authorList>
            <person name="Lin X."/>
            <person name="Kaul S."/>
            <person name="Rounsley S.D."/>
            <person name="Shea T.P."/>
            <person name="Benito M.-I."/>
            <person name="Town C.D."/>
            <person name="Fujii C.Y."/>
            <person name="Mason T.M."/>
            <person name="Bowman C.L."/>
            <person name="Barnstead M.E."/>
            <person name="Feldblyum T.V."/>
            <person name="Buell C.R."/>
            <person name="Ketchum K.A."/>
            <person name="Lee J.J."/>
            <person name="Ronning C.M."/>
            <person name="Koo H.L."/>
            <person name="Moffat K.S."/>
            <person name="Cronin L.A."/>
            <person name="Shen M."/>
            <person name="Pai G."/>
            <person name="Van Aken S."/>
            <person name="Umayam L."/>
            <person name="Tallon L.J."/>
            <person name="Gill J.E."/>
            <person name="Adams M.D."/>
            <person name="Carrera A.J."/>
            <person name="Creasy T.H."/>
            <person name="Goodman H.M."/>
            <person name="Somerville C.R."/>
            <person name="Copenhaver G.P."/>
            <person name="Preuss D."/>
            <person name="Nierman W.C."/>
            <person name="White O."/>
            <person name="Eisen J.A."/>
            <person name="Salzberg S.L."/>
            <person name="Fraser C.M."/>
            <person name="Venter J.C."/>
        </authorList>
    </citation>
    <scope>NUCLEOTIDE SEQUENCE [LARGE SCALE GENOMIC DNA]</scope>
    <source>
        <strain>cv. Columbia</strain>
    </source>
</reference>
<reference key="2">
    <citation type="journal article" date="2017" name="Plant J.">
        <title>Araport11: a complete reannotation of the Arabidopsis thaliana reference genome.</title>
        <authorList>
            <person name="Cheng C.Y."/>
            <person name="Krishnakumar V."/>
            <person name="Chan A.P."/>
            <person name="Thibaud-Nissen F."/>
            <person name="Schobel S."/>
            <person name="Town C.D."/>
        </authorList>
    </citation>
    <scope>GENOME REANNOTATION</scope>
    <source>
        <strain>cv. Columbia</strain>
    </source>
</reference>
<reference key="3">
    <citation type="submission" date="2005-02" db="EMBL/GenBank/DDBJ databases">
        <authorList>
            <person name="Underwood B.A."/>
            <person name="Xiao Y.-L."/>
            <person name="Moskal W.A. Jr."/>
            <person name="Monaghan E.L."/>
            <person name="Wang W."/>
            <person name="Redman J.C."/>
            <person name="Wu H.C."/>
            <person name="Utterback T."/>
            <person name="Town C.D."/>
        </authorList>
    </citation>
    <scope>NUCLEOTIDE SEQUENCE [LARGE SCALE MRNA] (ISOFORMS 1 AND 2)</scope>
    <source>
        <strain>cv. Columbia</strain>
    </source>
</reference>
<reference key="4">
    <citation type="journal article" date="2007" name="Nature">
        <title>Direct control of shoot meristem activity by a cytokinin-activating enzyme.</title>
        <authorList>
            <person name="Kurakawa T."/>
            <person name="Ueda N."/>
            <person name="Maekawa M."/>
            <person name="Kobayashi K."/>
            <person name="Kojima M."/>
            <person name="Nagato Y."/>
            <person name="Sakakibara H."/>
            <person name="Kyozuka J."/>
        </authorList>
    </citation>
    <scope>IDENTIFICATION</scope>
</reference>
<reference key="5">
    <citation type="journal article" date="2009" name="Plant Cell">
        <title>Functional analyses of LONELY GUY cytokinin-activating enzymes reveal the importance of the direct activation pathway in Arabidopsis.</title>
        <authorList>
            <person name="Kuroha T."/>
            <person name="Tokunaga H."/>
            <person name="Kojima M."/>
            <person name="Ueda N."/>
            <person name="Ishida T."/>
            <person name="Nagawa S."/>
            <person name="Fukuda H."/>
            <person name="Sugimoto K."/>
            <person name="Sakakibara H."/>
        </authorList>
    </citation>
    <scope>FUNCTION</scope>
    <scope>CATALYTIC ACTIVITY</scope>
    <scope>BIOPHYSICOCHEMICAL PROPERTIES</scope>
    <scope>DISRUPTION PHENOTYPE</scope>
    <scope>TISSUE SPECIFICITY</scope>
    <scope>SUBCELLULAR LOCATION</scope>
    <scope>GENE FAMILY</scope>
    <scope>NOMENCLATURE</scope>
</reference>
<sequence length="213" mass="23314">MEETKSRFRRICVFCGSSSGNKTTYHDAALQLAHQLVERNIDLVYGGGSVGLMGLISQAVHDGGRHVLGIIPKSLAPREITGESIGEVITVSTMHQRKAEMGRQADAFIALPGGYGTFEELLEVITWSQLGIHTKPVGLLNVDGFYDSLLTFIDKAVDEGFVSSTARRIIVSAPNAPQLLQLLEEYVPKHDDFVSKMVWDNTTDAFTLEGDSF</sequence>
<name>LOG2_ARATH</name>
<evidence type="ECO:0000250" key="1">
    <source>
        <dbReference type="UniProtKB" id="B2HS63"/>
    </source>
</evidence>
<evidence type="ECO:0000269" key="2">
    <source>
    </source>
</evidence>
<evidence type="ECO:0000303" key="3">
    <source ref="3"/>
</evidence>
<evidence type="ECO:0000305" key="4"/>
<organism>
    <name type="scientific">Arabidopsis thaliana</name>
    <name type="common">Mouse-ear cress</name>
    <dbReference type="NCBI Taxonomy" id="3702"/>
    <lineage>
        <taxon>Eukaryota</taxon>
        <taxon>Viridiplantae</taxon>
        <taxon>Streptophyta</taxon>
        <taxon>Embryophyta</taxon>
        <taxon>Tracheophyta</taxon>
        <taxon>Spermatophyta</taxon>
        <taxon>Magnoliopsida</taxon>
        <taxon>eudicotyledons</taxon>
        <taxon>Gunneridae</taxon>
        <taxon>Pentapetalae</taxon>
        <taxon>rosids</taxon>
        <taxon>malvids</taxon>
        <taxon>Brassicales</taxon>
        <taxon>Brassicaceae</taxon>
        <taxon>Camelineae</taxon>
        <taxon>Arabidopsis</taxon>
    </lineage>
</organism>
<accession>Q5BPS0</accession>
<accession>Q6DSS0</accession>
<accession>Q6DSS1</accession>
<accession>Q9SJ51</accession>
<comment type="function">
    <text evidence="2">Cytokinin-activating enzyme working in the direct activation pathway. Phosphoribohydrolase that converts inactive cytokinin nucleotides to the biologically active free-base forms.</text>
</comment>
<comment type="catalytic activity">
    <reaction evidence="2">
        <text>N(6)-(dimethylallyl)adenosine 5'-phosphate + H2O = N(6)-dimethylallyladenine + D-ribose 5-phosphate</text>
        <dbReference type="Rhea" id="RHEA:48560"/>
        <dbReference type="ChEBI" id="CHEBI:15377"/>
        <dbReference type="ChEBI" id="CHEBI:17660"/>
        <dbReference type="ChEBI" id="CHEBI:57526"/>
        <dbReference type="ChEBI" id="CHEBI:78346"/>
        <dbReference type="EC" id="3.2.2.n1"/>
    </reaction>
</comment>
<comment type="catalytic activity">
    <reaction evidence="2">
        <text>9-ribosyl-trans-zeatin 5'-phosphate + H2O = trans-zeatin + D-ribose 5-phosphate</text>
        <dbReference type="Rhea" id="RHEA:48564"/>
        <dbReference type="ChEBI" id="CHEBI:15377"/>
        <dbReference type="ChEBI" id="CHEBI:16522"/>
        <dbReference type="ChEBI" id="CHEBI:78346"/>
        <dbReference type="ChEBI" id="CHEBI:87947"/>
        <dbReference type="EC" id="3.2.2.n1"/>
    </reaction>
</comment>
<comment type="biophysicochemical properties">
    <kinetics>
        <KM evidence="2">58 uM for N(6)-(Delta(2)-isopentenyl)-adenosine 5'-phosphate</KM>
        <Vmax evidence="2">14.0 umol/min/mg enzyme with N(6)-(Delta(2)-isopentenyl)-adenosine 5'-phosphate as substrate</Vmax>
    </kinetics>
    <phDependence>
        <text evidence="2">Optimum pH is 6.5.</text>
    </phDependence>
</comment>
<comment type="subcellular location">
    <subcellularLocation>
        <location evidence="2">Cytoplasm</location>
    </subcellularLocation>
    <subcellularLocation>
        <location evidence="2">Nucleus</location>
    </subcellularLocation>
</comment>
<comment type="alternative products">
    <event type="alternative splicing"/>
    <isoform>
        <id>Q5BPS0-1</id>
        <name>1</name>
        <sequence type="displayed"/>
    </isoform>
    <isoform>
        <id>Q5BPS0-2</id>
        <name>2</name>
        <sequence type="described" ref="VSP_039355"/>
    </isoform>
</comment>
<comment type="tissue specificity">
    <text evidence="2">Expressed in roots and shoots. Detected in root hairs.</text>
</comment>
<comment type="disruption phenotype">
    <text evidence="2">No visible phenotype under normal growth conditions; due to the redundancy with other LOG proteins.</text>
</comment>
<comment type="similarity">
    <text evidence="4">Belongs to the LOG family.</text>
</comment>
<comment type="sequence caution" evidence="4">
    <conflict type="erroneous gene model prediction">
        <sequence resource="EMBL-CDS" id="AAD21458"/>
    </conflict>
</comment>
<protein>
    <recommendedName>
        <fullName>Cytokinin riboside 5'-monophosphate phosphoribohydrolase LOG2</fullName>
        <ecNumber>3.2.2.n1</ecNumber>
    </recommendedName>
    <alternativeName>
        <fullName>Protein LONELY GUY 2</fullName>
    </alternativeName>
</protein>